<protein>
    <recommendedName>
        <fullName evidence="1">1-pyrroline-5-carboxylate dehydrogenase</fullName>
        <shortName evidence="1">P5C dehydrogenase</shortName>
        <ecNumber evidence="1">1.2.1.88</ecNumber>
    </recommendedName>
    <alternativeName>
        <fullName evidence="1">L-glutamate gamma-semialdehyde dehydrogenase</fullName>
    </alternativeName>
</protein>
<feature type="chain" id="PRO_1000045970" description="1-pyrroline-5-carboxylate dehydrogenase">
    <location>
        <begin position="1"/>
        <end position="515"/>
    </location>
</feature>
<feature type="active site" evidence="1">
    <location>
        <position position="286"/>
    </location>
</feature>
<feature type="active site" evidence="1">
    <location>
        <position position="320"/>
    </location>
</feature>
<proteinExistence type="inferred from homology"/>
<dbReference type="EC" id="1.2.1.88" evidence="1"/>
<dbReference type="EMBL" id="BA000043">
    <property type="protein sequence ID" value="BAD74472.1"/>
    <property type="molecule type" value="Genomic_DNA"/>
</dbReference>
<dbReference type="SMR" id="Q5L3K8"/>
<dbReference type="STRING" id="235909.GK0187"/>
<dbReference type="KEGG" id="gka:GK0187"/>
<dbReference type="eggNOG" id="COG1012">
    <property type="taxonomic scope" value="Bacteria"/>
</dbReference>
<dbReference type="HOGENOM" id="CLU_005391_0_0_9"/>
<dbReference type="UniPathway" id="UPA00261">
    <property type="reaction ID" value="UER00374"/>
</dbReference>
<dbReference type="Proteomes" id="UP000001172">
    <property type="component" value="Chromosome"/>
</dbReference>
<dbReference type="GO" id="GO:0009898">
    <property type="term" value="C:cytoplasmic side of plasma membrane"/>
    <property type="evidence" value="ECO:0007669"/>
    <property type="project" value="TreeGrafter"/>
</dbReference>
<dbReference type="GO" id="GO:0003842">
    <property type="term" value="F:1-pyrroline-5-carboxylate dehydrogenase activity"/>
    <property type="evidence" value="ECO:0007669"/>
    <property type="project" value="UniProtKB-UniRule"/>
</dbReference>
<dbReference type="GO" id="GO:0006537">
    <property type="term" value="P:glutamate biosynthetic process"/>
    <property type="evidence" value="ECO:0007669"/>
    <property type="project" value="UniProtKB-UniRule"/>
</dbReference>
<dbReference type="GO" id="GO:0010133">
    <property type="term" value="P:proline catabolic process to glutamate"/>
    <property type="evidence" value="ECO:0007669"/>
    <property type="project" value="UniProtKB-UniPathway"/>
</dbReference>
<dbReference type="CDD" id="cd07124">
    <property type="entry name" value="ALDH_PutA-P5CDH-RocA"/>
    <property type="match status" value="1"/>
</dbReference>
<dbReference type="FunFam" id="3.40.309.10:FF:000005">
    <property type="entry name" value="1-pyrroline-5-carboxylate dehydrogenase 1"/>
    <property type="match status" value="1"/>
</dbReference>
<dbReference type="FunFam" id="3.40.605.10:FF:000045">
    <property type="entry name" value="1-pyrroline-5-carboxylate dehydrogenase 1"/>
    <property type="match status" value="1"/>
</dbReference>
<dbReference type="Gene3D" id="3.40.605.10">
    <property type="entry name" value="Aldehyde Dehydrogenase, Chain A, domain 1"/>
    <property type="match status" value="1"/>
</dbReference>
<dbReference type="Gene3D" id="3.40.309.10">
    <property type="entry name" value="Aldehyde Dehydrogenase, Chain A, domain 2"/>
    <property type="match status" value="1"/>
</dbReference>
<dbReference type="HAMAP" id="MF_00733">
    <property type="entry name" value="RocA"/>
    <property type="match status" value="1"/>
</dbReference>
<dbReference type="InterPro" id="IPR016161">
    <property type="entry name" value="Ald_DH/histidinol_DH"/>
</dbReference>
<dbReference type="InterPro" id="IPR016163">
    <property type="entry name" value="Ald_DH_C"/>
</dbReference>
<dbReference type="InterPro" id="IPR016160">
    <property type="entry name" value="Ald_DH_CS_CYS"/>
</dbReference>
<dbReference type="InterPro" id="IPR029510">
    <property type="entry name" value="Ald_DH_CS_GLU"/>
</dbReference>
<dbReference type="InterPro" id="IPR016162">
    <property type="entry name" value="Ald_DH_N"/>
</dbReference>
<dbReference type="InterPro" id="IPR015590">
    <property type="entry name" value="Aldehyde_DH_dom"/>
</dbReference>
<dbReference type="InterPro" id="IPR050485">
    <property type="entry name" value="Proline_metab_enzyme"/>
</dbReference>
<dbReference type="InterPro" id="IPR005932">
    <property type="entry name" value="RocA"/>
</dbReference>
<dbReference type="InterPro" id="IPR047597">
    <property type="entry name" value="RocA_bacillales"/>
</dbReference>
<dbReference type="NCBIfam" id="TIGR01237">
    <property type="entry name" value="D1pyr5carbox2"/>
    <property type="match status" value="1"/>
</dbReference>
<dbReference type="NCBIfam" id="NF002852">
    <property type="entry name" value="PRK03137.1"/>
    <property type="match status" value="1"/>
</dbReference>
<dbReference type="PANTHER" id="PTHR42862">
    <property type="entry name" value="DELTA-1-PYRROLINE-5-CARBOXYLATE DEHYDROGENASE 1, ISOFORM A-RELATED"/>
    <property type="match status" value="1"/>
</dbReference>
<dbReference type="PANTHER" id="PTHR42862:SF1">
    <property type="entry name" value="DELTA-1-PYRROLINE-5-CARBOXYLATE DEHYDROGENASE 2, ISOFORM A-RELATED"/>
    <property type="match status" value="1"/>
</dbReference>
<dbReference type="Pfam" id="PF00171">
    <property type="entry name" value="Aldedh"/>
    <property type="match status" value="1"/>
</dbReference>
<dbReference type="SUPFAM" id="SSF53720">
    <property type="entry name" value="ALDH-like"/>
    <property type="match status" value="1"/>
</dbReference>
<dbReference type="PROSITE" id="PS00070">
    <property type="entry name" value="ALDEHYDE_DEHYDR_CYS"/>
    <property type="match status" value="1"/>
</dbReference>
<dbReference type="PROSITE" id="PS00687">
    <property type="entry name" value="ALDEHYDE_DEHYDR_GLU"/>
    <property type="match status" value="1"/>
</dbReference>
<name>ROCA_GEOKA</name>
<keyword id="KW-0520">NAD</keyword>
<keyword id="KW-0560">Oxidoreductase</keyword>
<keyword id="KW-1185">Reference proteome</keyword>
<evidence type="ECO:0000255" key="1">
    <source>
        <dbReference type="HAMAP-Rule" id="MF_00733"/>
    </source>
</evidence>
<comment type="catalytic activity">
    <reaction evidence="1">
        <text>L-glutamate 5-semialdehyde + NAD(+) + H2O = L-glutamate + NADH + 2 H(+)</text>
        <dbReference type="Rhea" id="RHEA:30235"/>
        <dbReference type="ChEBI" id="CHEBI:15377"/>
        <dbReference type="ChEBI" id="CHEBI:15378"/>
        <dbReference type="ChEBI" id="CHEBI:29985"/>
        <dbReference type="ChEBI" id="CHEBI:57540"/>
        <dbReference type="ChEBI" id="CHEBI:57945"/>
        <dbReference type="ChEBI" id="CHEBI:58066"/>
        <dbReference type="EC" id="1.2.1.88"/>
    </reaction>
</comment>
<comment type="pathway">
    <text evidence="1">Amino-acid degradation; L-proline degradation into L-glutamate; L-glutamate from L-proline: step 2/2.</text>
</comment>
<comment type="similarity">
    <text evidence="1">Belongs to the aldehyde dehydrogenase family. RocA subfamily.</text>
</comment>
<organism>
    <name type="scientific">Geobacillus kaustophilus (strain HTA426)</name>
    <dbReference type="NCBI Taxonomy" id="235909"/>
    <lineage>
        <taxon>Bacteria</taxon>
        <taxon>Bacillati</taxon>
        <taxon>Bacillota</taxon>
        <taxon>Bacilli</taxon>
        <taxon>Bacillales</taxon>
        <taxon>Anoxybacillaceae</taxon>
        <taxon>Geobacillus</taxon>
        <taxon>Geobacillus thermoleovorans group</taxon>
    </lineage>
</organism>
<gene>
    <name evidence="1" type="primary">rocA</name>
    <name type="ordered locus">GK0187</name>
</gene>
<accession>Q5L3K8</accession>
<reference key="1">
    <citation type="journal article" date="2004" name="Nucleic Acids Res.">
        <title>Thermoadaptation trait revealed by the genome sequence of thermophilic Geobacillus kaustophilus.</title>
        <authorList>
            <person name="Takami H."/>
            <person name="Takaki Y."/>
            <person name="Chee G.-J."/>
            <person name="Nishi S."/>
            <person name="Shimamura S."/>
            <person name="Suzuki H."/>
            <person name="Matsui S."/>
            <person name="Uchiyama I."/>
        </authorList>
    </citation>
    <scope>NUCLEOTIDE SEQUENCE [LARGE SCALE GENOMIC DNA]</scope>
    <source>
        <strain>HTA426</strain>
    </source>
</reference>
<sequence>MVQPYRHEPLTDFTVEANREAFLAALKKVESELGRDYPLVIGGERVMTEDKIISINPANKTEVVGRVAKANKELAERAMKTADEAFRTWSRTSPEARADILFRAAAIVRRRKHEFSAWLVKEAGKPWREADADTAEAIDFMEYYGRQMLKLKDGIPVESRPGETNRFFYIPLGVGVVISPWNFPFAIMAGTTVASLVTGNTVLLKPASATPVVAYKFVEVLEEAGLPAGVLNYIPGSGAEVGDYLVDHPRTRFISFTGSRDVGIRIYERAAKVHPGQIWLKRVIAEMGGKDAIVVDKEADLELAAQSIVASAFGFSGQKCSACSRAIIVEDVYDQVLSRVVELTKQLNVGDPAEQATFMGPVIDQNAYNKIMEYIEIGKQEGRLMTGGEGDDAKGFFIQPTVFADVDPNARIMQEEIFGPVVAFAKARDFDHALEIANNTEYGLTGAVISRNRANLEKARHEFHVGNLYFNRGCTGAIVGYQPFGGFNMSGTDSKAGGPDYLILHMQAKTVSEMF</sequence>